<organism>
    <name type="scientific">Citrifermentans bemidjiense (strain ATCC BAA-1014 / DSM 16622 / JCM 12645 / Bem)</name>
    <name type="common">Geobacter bemidjiensis</name>
    <dbReference type="NCBI Taxonomy" id="404380"/>
    <lineage>
        <taxon>Bacteria</taxon>
        <taxon>Pseudomonadati</taxon>
        <taxon>Thermodesulfobacteriota</taxon>
        <taxon>Desulfuromonadia</taxon>
        <taxon>Geobacterales</taxon>
        <taxon>Geobacteraceae</taxon>
        <taxon>Citrifermentans</taxon>
    </lineage>
</organism>
<dbReference type="EMBL" id="CP001124">
    <property type="protein sequence ID" value="ACH37958.1"/>
    <property type="molecule type" value="Genomic_DNA"/>
</dbReference>
<dbReference type="RefSeq" id="WP_012529370.1">
    <property type="nucleotide sequence ID" value="NC_011146.1"/>
</dbReference>
<dbReference type="SMR" id="B5EFQ4"/>
<dbReference type="STRING" id="404380.Gbem_0937"/>
<dbReference type="KEGG" id="gbm:Gbem_0937"/>
<dbReference type="eggNOG" id="COG0185">
    <property type="taxonomic scope" value="Bacteria"/>
</dbReference>
<dbReference type="HOGENOM" id="CLU_144911_0_1_7"/>
<dbReference type="OrthoDB" id="9797833at2"/>
<dbReference type="Proteomes" id="UP000008825">
    <property type="component" value="Chromosome"/>
</dbReference>
<dbReference type="GO" id="GO:0005737">
    <property type="term" value="C:cytoplasm"/>
    <property type="evidence" value="ECO:0007669"/>
    <property type="project" value="UniProtKB-ARBA"/>
</dbReference>
<dbReference type="GO" id="GO:0015935">
    <property type="term" value="C:small ribosomal subunit"/>
    <property type="evidence" value="ECO:0007669"/>
    <property type="project" value="InterPro"/>
</dbReference>
<dbReference type="GO" id="GO:0019843">
    <property type="term" value="F:rRNA binding"/>
    <property type="evidence" value="ECO:0007669"/>
    <property type="project" value="UniProtKB-UniRule"/>
</dbReference>
<dbReference type="GO" id="GO:0003735">
    <property type="term" value="F:structural constituent of ribosome"/>
    <property type="evidence" value="ECO:0007669"/>
    <property type="project" value="InterPro"/>
</dbReference>
<dbReference type="GO" id="GO:0000028">
    <property type="term" value="P:ribosomal small subunit assembly"/>
    <property type="evidence" value="ECO:0007669"/>
    <property type="project" value="TreeGrafter"/>
</dbReference>
<dbReference type="GO" id="GO:0006412">
    <property type="term" value="P:translation"/>
    <property type="evidence" value="ECO:0007669"/>
    <property type="project" value="UniProtKB-UniRule"/>
</dbReference>
<dbReference type="FunFam" id="3.30.860.10:FF:000001">
    <property type="entry name" value="30S ribosomal protein S19"/>
    <property type="match status" value="1"/>
</dbReference>
<dbReference type="Gene3D" id="3.30.860.10">
    <property type="entry name" value="30s Ribosomal Protein S19, Chain A"/>
    <property type="match status" value="1"/>
</dbReference>
<dbReference type="HAMAP" id="MF_00531">
    <property type="entry name" value="Ribosomal_uS19"/>
    <property type="match status" value="1"/>
</dbReference>
<dbReference type="InterPro" id="IPR002222">
    <property type="entry name" value="Ribosomal_uS19"/>
</dbReference>
<dbReference type="InterPro" id="IPR005732">
    <property type="entry name" value="Ribosomal_uS19_bac-type"/>
</dbReference>
<dbReference type="InterPro" id="IPR023575">
    <property type="entry name" value="Ribosomal_uS19_SF"/>
</dbReference>
<dbReference type="NCBIfam" id="TIGR01050">
    <property type="entry name" value="rpsS_bact"/>
    <property type="match status" value="1"/>
</dbReference>
<dbReference type="PANTHER" id="PTHR11880">
    <property type="entry name" value="RIBOSOMAL PROTEIN S19P FAMILY MEMBER"/>
    <property type="match status" value="1"/>
</dbReference>
<dbReference type="PANTHER" id="PTHR11880:SF8">
    <property type="entry name" value="SMALL RIBOSOMAL SUBUNIT PROTEIN US19M"/>
    <property type="match status" value="1"/>
</dbReference>
<dbReference type="Pfam" id="PF00203">
    <property type="entry name" value="Ribosomal_S19"/>
    <property type="match status" value="1"/>
</dbReference>
<dbReference type="PIRSF" id="PIRSF002144">
    <property type="entry name" value="Ribosomal_S19"/>
    <property type="match status" value="1"/>
</dbReference>
<dbReference type="PRINTS" id="PR00975">
    <property type="entry name" value="RIBOSOMALS19"/>
</dbReference>
<dbReference type="SUPFAM" id="SSF54570">
    <property type="entry name" value="Ribosomal protein S19"/>
    <property type="match status" value="1"/>
</dbReference>
<comment type="function">
    <text evidence="1">Protein S19 forms a complex with S13 that binds strongly to the 16S ribosomal RNA.</text>
</comment>
<comment type="similarity">
    <text evidence="1">Belongs to the universal ribosomal protein uS19 family.</text>
</comment>
<sequence length="93" mass="10403">MARSIKKGPFVDGHLEAKAQAEQAGSKKVIKTWSRRSTIIPEFIGLTFAVHNGKKFIPVFVTENMVGHKMGEFSPTRTFYGHAADKKSKLKKK</sequence>
<proteinExistence type="inferred from homology"/>
<feature type="chain" id="PRO_1000127983" description="Small ribosomal subunit protein uS19">
    <location>
        <begin position="1"/>
        <end position="93"/>
    </location>
</feature>
<reference key="1">
    <citation type="submission" date="2008-07" db="EMBL/GenBank/DDBJ databases">
        <title>Complete sequence of Geobacter bemidjiensis BEM.</title>
        <authorList>
            <consortium name="US DOE Joint Genome Institute"/>
            <person name="Lucas S."/>
            <person name="Copeland A."/>
            <person name="Lapidus A."/>
            <person name="Glavina del Rio T."/>
            <person name="Dalin E."/>
            <person name="Tice H."/>
            <person name="Bruce D."/>
            <person name="Goodwin L."/>
            <person name="Pitluck S."/>
            <person name="Kiss H."/>
            <person name="Brettin T."/>
            <person name="Detter J.C."/>
            <person name="Han C."/>
            <person name="Kuske C.R."/>
            <person name="Schmutz J."/>
            <person name="Larimer F."/>
            <person name="Land M."/>
            <person name="Hauser L."/>
            <person name="Kyrpides N."/>
            <person name="Lykidis A."/>
            <person name="Lovley D."/>
            <person name="Richardson P."/>
        </authorList>
    </citation>
    <scope>NUCLEOTIDE SEQUENCE [LARGE SCALE GENOMIC DNA]</scope>
    <source>
        <strain>ATCC BAA-1014 / DSM 16622 / JCM 12645 / Bem</strain>
    </source>
</reference>
<keyword id="KW-1185">Reference proteome</keyword>
<keyword id="KW-0687">Ribonucleoprotein</keyword>
<keyword id="KW-0689">Ribosomal protein</keyword>
<keyword id="KW-0694">RNA-binding</keyword>
<keyword id="KW-0699">rRNA-binding</keyword>
<name>RS19_CITBB</name>
<gene>
    <name evidence="1" type="primary">rpsS</name>
    <name type="ordered locus">Gbem_0937</name>
</gene>
<accession>B5EFQ4</accession>
<protein>
    <recommendedName>
        <fullName evidence="1">Small ribosomal subunit protein uS19</fullName>
    </recommendedName>
    <alternativeName>
        <fullName evidence="2">30S ribosomal protein S19</fullName>
    </alternativeName>
</protein>
<evidence type="ECO:0000255" key="1">
    <source>
        <dbReference type="HAMAP-Rule" id="MF_00531"/>
    </source>
</evidence>
<evidence type="ECO:0000305" key="2"/>